<sequence>MFHEKPDKLLLSSIESFEIEPDLLTLRRIEEVINKTNQYRSNTIENYETKLNTMKSEFQSLMSEINLLTKVSGINYENLKLLGNGNEESMGDLSNKNIFNVMNEKSIELDNLKLSLAKNLNDLESQINSMNITKKDLMEKYELVKMKNDNLINDNILKNPDSKAIKINIYKNLGVEIESGEEGETENKQDKVIIYNKETNLSSILNIDDKYSEYFITNYIWDRLQGY</sequence>
<comment type="function">
    <text evidence="1">Acts as a component of the essential kinetochore-associated NDC80 complex, which is required for chromosome segregation and spindle checkpoint activity.</text>
</comment>
<comment type="subunit">
    <text evidence="1">Component of the NDC80 complex, which consists of NDC80, NUF2, SPC24 and SPC25.</text>
</comment>
<comment type="subcellular location">
    <subcellularLocation>
        <location evidence="1">Nucleus</location>
    </subcellularLocation>
    <subcellularLocation>
        <location evidence="1">Chromosome</location>
        <location evidence="1">Centromere</location>
        <location evidence="1">Kinetochore</location>
    </subcellularLocation>
    <text evidence="1">Associated with kinetochores.</text>
</comment>
<comment type="similarity">
    <text evidence="3">Belongs to the SPC24 family.</text>
</comment>
<name>SPC24_DEBHA</name>
<feature type="chain" id="PRO_0000246662" description="Probable kinetochore protein SPC24">
    <location>
        <begin position="1"/>
        <end position="227"/>
    </location>
</feature>
<feature type="coiled-coil region" evidence="2">
    <location>
        <begin position="41"/>
        <end position="70"/>
    </location>
</feature>
<feature type="coiled-coil region" evidence="2">
    <location>
        <begin position="107"/>
        <end position="155"/>
    </location>
</feature>
<keyword id="KW-0131">Cell cycle</keyword>
<keyword id="KW-0132">Cell division</keyword>
<keyword id="KW-0137">Centromere</keyword>
<keyword id="KW-0158">Chromosome</keyword>
<keyword id="KW-0175">Coiled coil</keyword>
<keyword id="KW-0995">Kinetochore</keyword>
<keyword id="KW-0498">Mitosis</keyword>
<keyword id="KW-0539">Nucleus</keyword>
<keyword id="KW-1185">Reference proteome</keyword>
<gene>
    <name type="primary">SPC24</name>
    <name type="ordered locus">DEHA2B04400g</name>
</gene>
<reference key="1">
    <citation type="journal article" date="2004" name="Nature">
        <title>Genome evolution in yeasts.</title>
        <authorList>
            <person name="Dujon B."/>
            <person name="Sherman D."/>
            <person name="Fischer G."/>
            <person name="Durrens P."/>
            <person name="Casaregola S."/>
            <person name="Lafontaine I."/>
            <person name="de Montigny J."/>
            <person name="Marck C."/>
            <person name="Neuveglise C."/>
            <person name="Talla E."/>
            <person name="Goffard N."/>
            <person name="Frangeul L."/>
            <person name="Aigle M."/>
            <person name="Anthouard V."/>
            <person name="Babour A."/>
            <person name="Barbe V."/>
            <person name="Barnay S."/>
            <person name="Blanchin S."/>
            <person name="Beckerich J.-M."/>
            <person name="Beyne E."/>
            <person name="Bleykasten C."/>
            <person name="Boisrame A."/>
            <person name="Boyer J."/>
            <person name="Cattolico L."/>
            <person name="Confanioleri F."/>
            <person name="de Daruvar A."/>
            <person name="Despons L."/>
            <person name="Fabre E."/>
            <person name="Fairhead C."/>
            <person name="Ferry-Dumazet H."/>
            <person name="Groppi A."/>
            <person name="Hantraye F."/>
            <person name="Hennequin C."/>
            <person name="Jauniaux N."/>
            <person name="Joyet P."/>
            <person name="Kachouri R."/>
            <person name="Kerrest A."/>
            <person name="Koszul R."/>
            <person name="Lemaire M."/>
            <person name="Lesur I."/>
            <person name="Ma L."/>
            <person name="Muller H."/>
            <person name="Nicaud J.-M."/>
            <person name="Nikolski M."/>
            <person name="Oztas S."/>
            <person name="Ozier-Kalogeropoulos O."/>
            <person name="Pellenz S."/>
            <person name="Potier S."/>
            <person name="Richard G.-F."/>
            <person name="Straub M.-L."/>
            <person name="Suleau A."/>
            <person name="Swennen D."/>
            <person name="Tekaia F."/>
            <person name="Wesolowski-Louvel M."/>
            <person name="Westhof E."/>
            <person name="Wirth B."/>
            <person name="Zeniou-Meyer M."/>
            <person name="Zivanovic Y."/>
            <person name="Bolotin-Fukuhara M."/>
            <person name="Thierry A."/>
            <person name="Bouchier C."/>
            <person name="Caudron B."/>
            <person name="Scarpelli C."/>
            <person name="Gaillardin C."/>
            <person name="Weissenbach J."/>
            <person name="Wincker P."/>
            <person name="Souciet J.-L."/>
        </authorList>
    </citation>
    <scope>NUCLEOTIDE SEQUENCE [LARGE SCALE GENOMIC DNA]</scope>
    <source>
        <strain>ATCC 36239 / CBS 767 / BCRC 21394 / JCM 1990 / NBRC 0083 / IGC 2968</strain>
    </source>
</reference>
<accession>Q6BXB6</accession>
<protein>
    <recommendedName>
        <fullName>Probable kinetochore protein SPC24</fullName>
    </recommendedName>
</protein>
<evidence type="ECO:0000250" key="1"/>
<evidence type="ECO:0000255" key="2"/>
<evidence type="ECO:0000305" key="3"/>
<proteinExistence type="inferred from homology"/>
<organism>
    <name type="scientific">Debaryomyces hansenii (strain ATCC 36239 / CBS 767 / BCRC 21394 / JCM 1990 / NBRC 0083 / IGC 2968)</name>
    <name type="common">Yeast</name>
    <name type="synonym">Torulaspora hansenii</name>
    <dbReference type="NCBI Taxonomy" id="284592"/>
    <lineage>
        <taxon>Eukaryota</taxon>
        <taxon>Fungi</taxon>
        <taxon>Dikarya</taxon>
        <taxon>Ascomycota</taxon>
        <taxon>Saccharomycotina</taxon>
        <taxon>Pichiomycetes</taxon>
        <taxon>Debaryomycetaceae</taxon>
        <taxon>Debaryomyces</taxon>
    </lineage>
</organism>
<dbReference type="EMBL" id="CR382134">
    <property type="protein sequence ID" value="CAG85147.1"/>
    <property type="molecule type" value="Genomic_DNA"/>
</dbReference>
<dbReference type="RefSeq" id="XP_457153.1">
    <property type="nucleotide sequence ID" value="XM_457153.1"/>
</dbReference>
<dbReference type="SMR" id="Q6BXB6"/>
<dbReference type="FunCoup" id="Q6BXB6">
    <property type="interactions" value="119"/>
</dbReference>
<dbReference type="STRING" id="284592.Q6BXB6"/>
<dbReference type="GeneID" id="2913209"/>
<dbReference type="KEGG" id="dha:DEHA2B04400g"/>
<dbReference type="VEuPathDB" id="FungiDB:DEHA2B04400g"/>
<dbReference type="eggNOG" id="ENOG502S52R">
    <property type="taxonomic scope" value="Eukaryota"/>
</dbReference>
<dbReference type="HOGENOM" id="CLU_091441_0_0_1"/>
<dbReference type="InParanoid" id="Q6BXB6"/>
<dbReference type="OMA" id="ENMPPNA"/>
<dbReference type="OrthoDB" id="3344830at2759"/>
<dbReference type="Proteomes" id="UP000000599">
    <property type="component" value="Chromosome B"/>
</dbReference>
<dbReference type="GO" id="GO:0031262">
    <property type="term" value="C:Ndc80 complex"/>
    <property type="evidence" value="ECO:0000250"/>
    <property type="project" value="UniProtKB"/>
</dbReference>
<dbReference type="GO" id="GO:0005634">
    <property type="term" value="C:nucleus"/>
    <property type="evidence" value="ECO:0007669"/>
    <property type="project" value="UniProtKB-SubCell"/>
</dbReference>
<dbReference type="GO" id="GO:0008017">
    <property type="term" value="F:microtubule binding"/>
    <property type="evidence" value="ECO:0007669"/>
    <property type="project" value="TreeGrafter"/>
</dbReference>
<dbReference type="GO" id="GO:0051301">
    <property type="term" value="P:cell division"/>
    <property type="evidence" value="ECO:0007669"/>
    <property type="project" value="UniProtKB-KW"/>
</dbReference>
<dbReference type="GO" id="GO:0031134">
    <property type="term" value="P:sister chromatid biorientation"/>
    <property type="evidence" value="ECO:0000250"/>
    <property type="project" value="UniProtKB"/>
</dbReference>
<dbReference type="CDD" id="cd11565">
    <property type="entry name" value="RWD_Spc24"/>
    <property type="match status" value="1"/>
</dbReference>
<dbReference type="Gene3D" id="3.30.160.430">
    <property type="match status" value="1"/>
</dbReference>
<dbReference type="InterPro" id="IPR013252">
    <property type="entry name" value="Ndc80_Spc24"/>
</dbReference>
<dbReference type="InterPro" id="IPR038066">
    <property type="entry name" value="Spc24_Fungi_globular_sf"/>
</dbReference>
<dbReference type="PANTHER" id="PTHR22142">
    <property type="match status" value="1"/>
</dbReference>
<dbReference type="PANTHER" id="PTHR22142:SF2">
    <property type="entry name" value="KINETOCHORE PROTEIN SPC24"/>
    <property type="match status" value="1"/>
</dbReference>
<dbReference type="Pfam" id="PF08286">
    <property type="entry name" value="Spc24"/>
    <property type="match status" value="1"/>
</dbReference>
<dbReference type="SUPFAM" id="SSF143026">
    <property type="entry name" value="Kinetochore globular domain"/>
    <property type="match status" value="1"/>
</dbReference>